<gene>
    <name evidence="1" type="primary">speD</name>
    <name type="ordered locus">YPN_0676</name>
    <name type="ORF">YP516_0719</name>
</gene>
<keyword id="KW-0068">Autocatalytic cleavage</keyword>
<keyword id="KW-0210">Decarboxylase</keyword>
<keyword id="KW-0456">Lyase</keyword>
<keyword id="KW-0620">Polyamine biosynthesis</keyword>
<keyword id="KW-0670">Pyruvate</keyword>
<keyword id="KW-0949">S-adenosyl-L-methionine</keyword>
<keyword id="KW-0704">Schiff base</keyword>
<keyword id="KW-0745">Spermidine biosynthesis</keyword>
<keyword id="KW-0865">Zymogen</keyword>
<proteinExistence type="inferred from homology"/>
<protein>
    <recommendedName>
        <fullName evidence="1">S-adenosylmethionine decarboxylase proenzyme</fullName>
        <shortName evidence="1">AdoMetDC</shortName>
        <shortName evidence="1">SAMDC</shortName>
        <ecNumber evidence="1">4.1.1.50</ecNumber>
    </recommendedName>
    <component>
        <recommendedName>
            <fullName evidence="1">S-adenosylmethionine decarboxylase beta chain</fullName>
        </recommendedName>
    </component>
    <component>
        <recommendedName>
            <fullName evidence="1">S-adenosylmethionine decarboxylase alpha chain</fullName>
        </recommendedName>
    </component>
</protein>
<evidence type="ECO:0000255" key="1">
    <source>
        <dbReference type="HAMAP-Rule" id="MF_00465"/>
    </source>
</evidence>
<dbReference type="EC" id="4.1.1.50" evidence="1"/>
<dbReference type="EMBL" id="CP000305">
    <property type="protein sequence ID" value="ABG17008.1"/>
    <property type="molecule type" value="Genomic_DNA"/>
</dbReference>
<dbReference type="EMBL" id="ACNQ01000007">
    <property type="protein sequence ID" value="EEO77867.1"/>
    <property type="molecule type" value="Genomic_DNA"/>
</dbReference>
<dbReference type="RefSeq" id="WP_002209337.1">
    <property type="nucleotide sequence ID" value="NZ_ACNQ01000007.1"/>
</dbReference>
<dbReference type="SMR" id="Q1CLX2"/>
<dbReference type="GeneID" id="57975297"/>
<dbReference type="KEGG" id="ypn:YPN_0676"/>
<dbReference type="HOGENOM" id="CLU_092007_0_0_6"/>
<dbReference type="UniPathway" id="UPA00331">
    <property type="reaction ID" value="UER00451"/>
</dbReference>
<dbReference type="Proteomes" id="UP000008936">
    <property type="component" value="Chromosome"/>
</dbReference>
<dbReference type="GO" id="GO:0005829">
    <property type="term" value="C:cytosol"/>
    <property type="evidence" value="ECO:0007669"/>
    <property type="project" value="TreeGrafter"/>
</dbReference>
<dbReference type="GO" id="GO:0004014">
    <property type="term" value="F:adenosylmethionine decarboxylase activity"/>
    <property type="evidence" value="ECO:0007669"/>
    <property type="project" value="UniProtKB-UniRule"/>
</dbReference>
<dbReference type="GO" id="GO:0008295">
    <property type="term" value="P:spermidine biosynthetic process"/>
    <property type="evidence" value="ECO:0007669"/>
    <property type="project" value="UniProtKB-UniRule"/>
</dbReference>
<dbReference type="FunFam" id="3.60.90.10:FF:000001">
    <property type="entry name" value="S-adenosylmethionine decarboxylase proenzyme"/>
    <property type="match status" value="1"/>
</dbReference>
<dbReference type="Gene3D" id="3.60.90.10">
    <property type="entry name" value="S-adenosylmethionine decarboxylase"/>
    <property type="match status" value="1"/>
</dbReference>
<dbReference type="HAMAP" id="MF_00465">
    <property type="entry name" value="AdoMetDC_2"/>
    <property type="match status" value="1"/>
</dbReference>
<dbReference type="InterPro" id="IPR003826">
    <property type="entry name" value="AdoMetDC_fam_prok"/>
</dbReference>
<dbReference type="InterPro" id="IPR009165">
    <property type="entry name" value="S-AdoMet_deCO2ase_bac"/>
</dbReference>
<dbReference type="InterPro" id="IPR016067">
    <property type="entry name" value="S-AdoMet_deCO2ase_core"/>
</dbReference>
<dbReference type="NCBIfam" id="TIGR03331">
    <property type="entry name" value="SAM_DCase_Eco"/>
    <property type="match status" value="1"/>
</dbReference>
<dbReference type="PANTHER" id="PTHR33866">
    <property type="entry name" value="S-ADENOSYLMETHIONINE DECARBOXYLASE PROENZYME"/>
    <property type="match status" value="1"/>
</dbReference>
<dbReference type="PANTHER" id="PTHR33866:SF1">
    <property type="entry name" value="S-ADENOSYLMETHIONINE DECARBOXYLASE PROENZYME"/>
    <property type="match status" value="1"/>
</dbReference>
<dbReference type="Pfam" id="PF02675">
    <property type="entry name" value="AdoMet_dc"/>
    <property type="match status" value="1"/>
</dbReference>
<dbReference type="PIRSF" id="PIRSF001356">
    <property type="entry name" value="SAM_decarboxylas"/>
    <property type="match status" value="1"/>
</dbReference>
<dbReference type="SUPFAM" id="SSF56276">
    <property type="entry name" value="S-adenosylmethionine decarboxylase"/>
    <property type="match status" value="1"/>
</dbReference>
<name>SPED_YERPN</name>
<sequence>MSKLKLHGFNNLTKSLSFCIYDICYAKTADDRDGYIAYIDEQYNANRLTEILSETCSIIGANILNIARQDYDPQGASVTILVSEEPVDPRDVDTSEHPGPLPSAVVAHLDKSHICVHTYPESHPEAGLCTFRADIEVSTCGVISPLKALNYLIHQLESDIVTMDYRVRGFTRDINGVKHFIDHKINSIQNFMSDDMKSLYHMMDVNVYQENIFHTKMMLKDFDLKHYLFNAKPEELSAEEKEQITRLLYKEMQEIYYGRNVPEV</sequence>
<comment type="function">
    <text evidence="1">Catalyzes the decarboxylation of S-adenosylmethionine to S-adenosylmethioninamine (dcAdoMet), the propylamine donor required for the synthesis of the polyamines spermine and spermidine from the diamine putrescine.</text>
</comment>
<comment type="catalytic activity">
    <reaction evidence="1">
        <text>S-adenosyl-L-methionine + H(+) = S-adenosyl 3-(methylsulfanyl)propylamine + CO2</text>
        <dbReference type="Rhea" id="RHEA:15981"/>
        <dbReference type="ChEBI" id="CHEBI:15378"/>
        <dbReference type="ChEBI" id="CHEBI:16526"/>
        <dbReference type="ChEBI" id="CHEBI:57443"/>
        <dbReference type="ChEBI" id="CHEBI:59789"/>
        <dbReference type="EC" id="4.1.1.50"/>
    </reaction>
</comment>
<comment type="cofactor">
    <cofactor evidence="1">
        <name>pyruvate</name>
        <dbReference type="ChEBI" id="CHEBI:15361"/>
    </cofactor>
    <text evidence="1">Binds 1 pyruvoyl group covalently per subunit.</text>
</comment>
<comment type="pathway">
    <text evidence="1">Amine and polyamine biosynthesis; S-adenosylmethioninamine biosynthesis; S-adenosylmethioninamine from S-adenosyl-L-methionine: step 1/1.</text>
</comment>
<comment type="subunit">
    <text evidence="1">Heterooctamer of four alpha and four beta chains arranged as a tetramer of alpha/beta heterodimers.</text>
</comment>
<comment type="PTM">
    <text evidence="1">Is synthesized initially as an inactive proenzyme. Formation of the active enzyme involves a self-maturation process in which the active site pyruvoyl group is generated from an internal serine residue via an autocatalytic post-translational modification. Two non-identical subunits are generated from the proenzyme in this reaction, and the pyruvate is formed at the N-terminus of the alpha chain, which is derived from the carboxyl end of the proenzyme. The post-translation cleavage follows an unusual pathway, termed non-hydrolytic serinolysis, in which the side chain hydroxyl group of the serine supplies its oxygen atom to form the C-terminus of the beta chain, while the remainder of the serine residue undergoes an oxidative deamination to produce ammonia and the pyruvoyl group blocking the N-terminus of the alpha chain.</text>
</comment>
<comment type="similarity">
    <text evidence="1">Belongs to the prokaryotic AdoMetDC family. Type 2 subfamily.</text>
</comment>
<reference key="1">
    <citation type="journal article" date="2006" name="J. Bacteriol.">
        <title>Complete genome sequence of Yersinia pestis strains Antiqua and Nepal516: evidence of gene reduction in an emerging pathogen.</title>
        <authorList>
            <person name="Chain P.S.G."/>
            <person name="Hu P."/>
            <person name="Malfatti S.A."/>
            <person name="Radnedge L."/>
            <person name="Larimer F."/>
            <person name="Vergez L.M."/>
            <person name="Worsham P."/>
            <person name="Chu M.C."/>
            <person name="Andersen G.L."/>
        </authorList>
    </citation>
    <scope>NUCLEOTIDE SEQUENCE [LARGE SCALE GENOMIC DNA]</scope>
    <source>
        <strain>Nepal516</strain>
    </source>
</reference>
<reference key="2">
    <citation type="submission" date="2009-04" db="EMBL/GenBank/DDBJ databases">
        <title>Yersinia pestis Nepal516A whole genome shotgun sequencing project.</title>
        <authorList>
            <person name="Plunkett G. III"/>
            <person name="Anderson B.D."/>
            <person name="Baumler D.J."/>
            <person name="Burland V."/>
            <person name="Cabot E.L."/>
            <person name="Glasner J.D."/>
            <person name="Mau B."/>
            <person name="Neeno-Eckwall E."/>
            <person name="Perna N.T."/>
            <person name="Munk A.C."/>
            <person name="Tapia R."/>
            <person name="Green L.D."/>
            <person name="Rogers Y.C."/>
            <person name="Detter J.C."/>
            <person name="Bruce D.C."/>
            <person name="Brettin T.S."/>
        </authorList>
    </citation>
    <scope>NUCLEOTIDE SEQUENCE [LARGE SCALE GENOMIC DNA]</scope>
    <source>
        <strain>Nepal516</strain>
    </source>
</reference>
<feature type="chain" id="PRO_0000273625" description="S-adenosylmethionine decarboxylase beta chain" evidence="1">
    <location>
        <begin position="1"/>
        <end position="111"/>
    </location>
</feature>
<feature type="chain" id="PRO_0000273626" description="S-adenosylmethionine decarboxylase alpha chain" evidence="1">
    <location>
        <begin position="112"/>
        <end position="264"/>
    </location>
</feature>
<feature type="active site" description="Schiff-base intermediate with substrate; via pyruvic acid" evidence="1">
    <location>
        <position position="112"/>
    </location>
</feature>
<feature type="active site" description="Proton acceptor; for processing activity" evidence="1">
    <location>
        <position position="117"/>
    </location>
</feature>
<feature type="active site" description="Proton donor; for catalytic activity" evidence="1">
    <location>
        <position position="140"/>
    </location>
</feature>
<feature type="site" description="Cleavage (non-hydrolytic); by autolysis" evidence="1">
    <location>
        <begin position="111"/>
        <end position="112"/>
    </location>
</feature>
<feature type="modified residue" description="Pyruvic acid (Ser); by autocatalysis" evidence="1">
    <location>
        <position position="112"/>
    </location>
</feature>
<accession>Q1CLX2</accession>
<accession>C4GQ41</accession>
<organism>
    <name type="scientific">Yersinia pestis bv. Antiqua (strain Nepal516)</name>
    <dbReference type="NCBI Taxonomy" id="377628"/>
    <lineage>
        <taxon>Bacteria</taxon>
        <taxon>Pseudomonadati</taxon>
        <taxon>Pseudomonadota</taxon>
        <taxon>Gammaproteobacteria</taxon>
        <taxon>Enterobacterales</taxon>
        <taxon>Yersiniaceae</taxon>
        <taxon>Yersinia</taxon>
    </lineage>
</organism>